<proteinExistence type="evidence at transcript level"/>
<comment type="function">
    <text evidence="1">Involved in endoplasmic reticulum-associated protein degradation (ERAD). Acts as a platform to recruit both UBQLN1 and VCP to the ER during ERAD.</text>
</comment>
<comment type="subunit">
    <text evidence="1">Directly interacts with VCP. Interacts with UBQLN1. Forms a complex with VCP and UBQLN1.</text>
</comment>
<comment type="subcellular location">
    <subcellularLocation>
        <location evidence="1">Endoplasmic reticulum membrane</location>
        <topology evidence="1">Peripheral membrane protein</topology>
    </subcellularLocation>
    <subcellularLocation>
        <location evidence="1">Nucleus envelope</location>
    </subcellularLocation>
    <text evidence="1">Both the N- and the C-terminus face the cytosol. Also found in the nucleus envelope contiguous to the ER.</text>
</comment>
<comment type="domain">
    <text evidence="1">The UBX domain is required for interaction with VCP.</text>
</comment>
<comment type="domain">
    <text evidence="1">The intramembrane domain also contains the signal for ER targeting.</text>
</comment>
<organism>
    <name type="scientific">Pongo abelii</name>
    <name type="common">Sumatran orangutan</name>
    <name type="synonym">Pongo pygmaeus abelii</name>
    <dbReference type="NCBI Taxonomy" id="9601"/>
    <lineage>
        <taxon>Eukaryota</taxon>
        <taxon>Metazoa</taxon>
        <taxon>Chordata</taxon>
        <taxon>Craniata</taxon>
        <taxon>Vertebrata</taxon>
        <taxon>Euteleostomi</taxon>
        <taxon>Mammalia</taxon>
        <taxon>Eutheria</taxon>
        <taxon>Euarchontoglires</taxon>
        <taxon>Primates</taxon>
        <taxon>Haplorrhini</taxon>
        <taxon>Catarrhini</taxon>
        <taxon>Hominidae</taxon>
        <taxon>Pongo</taxon>
    </lineage>
</organism>
<accession>Q5R4I3</accession>
<keyword id="KW-0256">Endoplasmic reticulum</keyword>
<keyword id="KW-0472">Membrane</keyword>
<keyword id="KW-0539">Nucleus</keyword>
<keyword id="KW-0597">Phosphoprotein</keyword>
<keyword id="KW-1185">Reference proteome</keyword>
<keyword id="KW-0834">Unfolded protein response</keyword>
<protein>
    <recommendedName>
        <fullName>UBX domain-containing protein 4</fullName>
    </recommendedName>
    <alternativeName>
        <fullName>UBX domain-containing protein 2</fullName>
    </alternativeName>
</protein>
<evidence type="ECO:0000250" key="1">
    <source>
        <dbReference type="UniProtKB" id="Q92575"/>
    </source>
</evidence>
<evidence type="ECO:0000255" key="2"/>
<evidence type="ECO:0000255" key="3">
    <source>
        <dbReference type="PROSITE-ProRule" id="PRU00215"/>
    </source>
</evidence>
<evidence type="ECO:0000256" key="4">
    <source>
        <dbReference type="SAM" id="MobiDB-lite"/>
    </source>
</evidence>
<gene>
    <name type="primary">UBXN4</name>
    <name type="synonym">UBXD2</name>
</gene>
<reference key="1">
    <citation type="submission" date="2004-11" db="EMBL/GenBank/DDBJ databases">
        <authorList>
            <consortium name="The German cDNA consortium"/>
        </authorList>
    </citation>
    <scope>NUCLEOTIDE SEQUENCE [LARGE SCALE MRNA]</scope>
    <source>
        <tissue>Brain cortex</tissue>
    </source>
</reference>
<sequence>MLWFQGAIPAAIATAKRSGAVFVVFVAGDDEQSTQMAASWEDDKVTEASSNSFVAIKIDTKSEACLQFSQIYPVVCVPSSFFIGDSGIPLEVIAGSVSADELVTRIHKVRQMHLLKSETSVANGSQSESSVSTPSASFEPNNTCENSQSRNAELCEIPPTSDTKSDTATGGESAGHATSSQEPSGCSDQRPAEDLNIRVERLTKKLEERREEKRKEEEQREIKKEIERRKTGKEMLDYKRKQEEELTKRMLEERNREKAEDRAARERIKQQIALDRAERAARFAKTKEEVEAAKAAALLAKQAEMEVKRESYARERSTVARIQFRLPDGSSFTNQFPSDAPLEEARQFAAQTVGNTYGNFSLATMFPRREFTKEDYKKKLLDLELAPSASVVVLPAGRPTASIVHSSSGDIWTLLGTVLYPFLAIWRLISNFLFSNPPPTQTSVRVTSSEPPNPASSSKSEKREPVRKRVLEKRGDDFKKEGKIYRLRTQDDGEDENNTWNGNSTQQM</sequence>
<name>UBXN4_PONAB</name>
<dbReference type="EMBL" id="CR861265">
    <property type="protein sequence ID" value="CAH93333.1"/>
    <property type="molecule type" value="mRNA"/>
</dbReference>
<dbReference type="RefSeq" id="NP_001126962.1">
    <property type="nucleotide sequence ID" value="NM_001133490.1"/>
</dbReference>
<dbReference type="SMR" id="Q5R4I3"/>
<dbReference type="FunCoup" id="Q5R4I3">
    <property type="interactions" value="3294"/>
</dbReference>
<dbReference type="STRING" id="9601.ENSPPYP00000014304"/>
<dbReference type="Ensembl" id="ENSPPYT00000014887.3">
    <property type="protein sequence ID" value="ENSPPYP00000014304.3"/>
    <property type="gene ID" value="ENSPPYG00000012819.3"/>
</dbReference>
<dbReference type="GeneID" id="100173981"/>
<dbReference type="KEGG" id="pon:100173981"/>
<dbReference type="CTD" id="23190"/>
<dbReference type="eggNOG" id="KOG2507">
    <property type="taxonomic scope" value="Eukaryota"/>
</dbReference>
<dbReference type="GeneTree" id="ENSGT00940000160205"/>
<dbReference type="InParanoid" id="Q5R4I3"/>
<dbReference type="OMA" id="FEPNNTS"/>
<dbReference type="OrthoDB" id="2445133at2759"/>
<dbReference type="Proteomes" id="UP000001595">
    <property type="component" value="Chromosome 2B"/>
</dbReference>
<dbReference type="GO" id="GO:0005829">
    <property type="term" value="C:cytosol"/>
    <property type="evidence" value="ECO:0007669"/>
    <property type="project" value="Ensembl"/>
</dbReference>
<dbReference type="GO" id="GO:0005789">
    <property type="term" value="C:endoplasmic reticulum membrane"/>
    <property type="evidence" value="ECO:0007669"/>
    <property type="project" value="UniProtKB-SubCell"/>
</dbReference>
<dbReference type="GO" id="GO:0005635">
    <property type="term" value="C:nuclear envelope"/>
    <property type="evidence" value="ECO:0007669"/>
    <property type="project" value="UniProtKB-SubCell"/>
</dbReference>
<dbReference type="GO" id="GO:0036503">
    <property type="term" value="P:ERAD pathway"/>
    <property type="evidence" value="ECO:0000250"/>
    <property type="project" value="UniProtKB"/>
</dbReference>
<dbReference type="GO" id="GO:0006986">
    <property type="term" value="P:response to unfolded protein"/>
    <property type="evidence" value="ECO:0007669"/>
    <property type="project" value="UniProtKB-KW"/>
</dbReference>
<dbReference type="CDD" id="cd16117">
    <property type="entry name" value="UBX_UBXN4"/>
    <property type="match status" value="1"/>
</dbReference>
<dbReference type="FunFam" id="3.10.20.90:FF:000196">
    <property type="entry name" value="UBX domain-containing protein 4"/>
    <property type="match status" value="1"/>
</dbReference>
<dbReference type="FunFam" id="3.40.30.10:FF:000163">
    <property type="entry name" value="UBX domain-containing protein 4"/>
    <property type="match status" value="1"/>
</dbReference>
<dbReference type="Gene3D" id="3.40.30.10">
    <property type="entry name" value="Glutaredoxin"/>
    <property type="match status" value="1"/>
</dbReference>
<dbReference type="Gene3D" id="3.10.20.90">
    <property type="entry name" value="Phosphatidylinositol 3-kinase Catalytic Subunit, Chain A, domain 1"/>
    <property type="match status" value="1"/>
</dbReference>
<dbReference type="InterPro" id="IPR036249">
    <property type="entry name" value="Thioredoxin-like_sf"/>
</dbReference>
<dbReference type="InterPro" id="IPR029071">
    <property type="entry name" value="Ubiquitin-like_domsf"/>
</dbReference>
<dbReference type="InterPro" id="IPR001012">
    <property type="entry name" value="UBX_dom"/>
</dbReference>
<dbReference type="PANTHER" id="PTHR46424">
    <property type="entry name" value="UBX DOMAIN-CONTAINING PROTEIN 4"/>
    <property type="match status" value="1"/>
</dbReference>
<dbReference type="PANTHER" id="PTHR46424:SF1">
    <property type="entry name" value="UBX DOMAIN-CONTAINING PROTEIN 4"/>
    <property type="match status" value="1"/>
</dbReference>
<dbReference type="Pfam" id="PF00789">
    <property type="entry name" value="UBX"/>
    <property type="match status" value="1"/>
</dbReference>
<dbReference type="Pfam" id="PF23187">
    <property type="entry name" value="UBX7_N"/>
    <property type="match status" value="1"/>
</dbReference>
<dbReference type="SMART" id="SM00166">
    <property type="entry name" value="UBX"/>
    <property type="match status" value="1"/>
</dbReference>
<dbReference type="SUPFAM" id="SSF52833">
    <property type="entry name" value="Thioredoxin-like"/>
    <property type="match status" value="1"/>
</dbReference>
<dbReference type="SUPFAM" id="SSF54236">
    <property type="entry name" value="Ubiquitin-like"/>
    <property type="match status" value="1"/>
</dbReference>
<dbReference type="PROSITE" id="PS50033">
    <property type="entry name" value="UBX"/>
    <property type="match status" value="1"/>
</dbReference>
<feature type="chain" id="PRO_0000317475" description="UBX domain-containing protein 4">
    <location>
        <begin position="1"/>
        <end position="508"/>
    </location>
</feature>
<feature type="topological domain" description="Cytoplasmic" evidence="2">
    <location>
        <begin position="1"/>
        <end position="413"/>
    </location>
</feature>
<feature type="intramembrane region" evidence="2">
    <location>
        <begin position="414"/>
        <end position="434"/>
    </location>
</feature>
<feature type="topological domain" description="Cytoplasmic" evidence="2">
    <location>
        <begin position="435"/>
        <end position="508"/>
    </location>
</feature>
<feature type="domain" description="UBX" evidence="3">
    <location>
        <begin position="315"/>
        <end position="393"/>
    </location>
</feature>
<feature type="region of interest" description="Interaction with UBQLN1" evidence="1">
    <location>
        <begin position="1"/>
        <end position="200"/>
    </location>
</feature>
<feature type="region of interest" description="Disordered" evidence="4">
    <location>
        <begin position="117"/>
        <end position="196"/>
    </location>
</feature>
<feature type="region of interest" description="Disordered" evidence="4">
    <location>
        <begin position="440"/>
        <end position="508"/>
    </location>
</feature>
<feature type="compositionally biased region" description="Polar residues" evidence="4">
    <location>
        <begin position="117"/>
        <end position="151"/>
    </location>
</feature>
<feature type="compositionally biased region" description="Polar residues" evidence="4">
    <location>
        <begin position="160"/>
        <end position="187"/>
    </location>
</feature>
<feature type="compositionally biased region" description="Polar residues" evidence="4">
    <location>
        <begin position="441"/>
        <end position="458"/>
    </location>
</feature>
<feature type="compositionally biased region" description="Basic and acidic residues" evidence="4">
    <location>
        <begin position="459"/>
        <end position="491"/>
    </location>
</feature>
<feature type="compositionally biased region" description="Polar residues" evidence="4">
    <location>
        <begin position="498"/>
        <end position="508"/>
    </location>
</feature>
<feature type="modified residue" description="Phosphothreonine" evidence="1">
    <location>
        <position position="489"/>
    </location>
</feature>